<name>Y2681_SHEPC</name>
<accession>A4Y8W7</accession>
<sequence>MESLQNHFLIAMPSLDDTFFERSVIYLCEHDDKGAMGIVINKPLGIEVSSLLEQMDLPAEQVFADIAQNAQVLMGGPVSQDRGFVLHTSQPYWANSTDLGSGLMLTTSRDVLTAIGGKRSPDKFLVALGYAGWGKHQLEQELAENSWLTIPATNALLFDVKHEDRWPQASRSLGFDAWQVSAQAGHA</sequence>
<organism>
    <name type="scientific">Shewanella putrefaciens (strain CN-32 / ATCC BAA-453)</name>
    <dbReference type="NCBI Taxonomy" id="319224"/>
    <lineage>
        <taxon>Bacteria</taxon>
        <taxon>Pseudomonadati</taxon>
        <taxon>Pseudomonadota</taxon>
        <taxon>Gammaproteobacteria</taxon>
        <taxon>Alteromonadales</taxon>
        <taxon>Shewanellaceae</taxon>
        <taxon>Shewanella</taxon>
    </lineage>
</organism>
<reference key="1">
    <citation type="submission" date="2007-04" db="EMBL/GenBank/DDBJ databases">
        <title>Complete sequence of Shewanella putrefaciens CN-32.</title>
        <authorList>
            <consortium name="US DOE Joint Genome Institute"/>
            <person name="Copeland A."/>
            <person name="Lucas S."/>
            <person name="Lapidus A."/>
            <person name="Barry K."/>
            <person name="Detter J.C."/>
            <person name="Glavina del Rio T."/>
            <person name="Hammon N."/>
            <person name="Israni S."/>
            <person name="Dalin E."/>
            <person name="Tice H."/>
            <person name="Pitluck S."/>
            <person name="Chain P."/>
            <person name="Malfatti S."/>
            <person name="Shin M."/>
            <person name="Vergez L."/>
            <person name="Schmutz J."/>
            <person name="Larimer F."/>
            <person name="Land M."/>
            <person name="Hauser L."/>
            <person name="Kyrpides N."/>
            <person name="Mikhailova N."/>
            <person name="Romine M.F."/>
            <person name="Fredrickson J."/>
            <person name="Tiedje J."/>
            <person name="Richardson P."/>
        </authorList>
    </citation>
    <scope>NUCLEOTIDE SEQUENCE [LARGE SCALE GENOMIC DNA]</scope>
    <source>
        <strain>CN-32 / ATCC BAA-453</strain>
    </source>
</reference>
<protein>
    <recommendedName>
        <fullName evidence="1">UPF0301 protein Sputcn32_2681</fullName>
    </recommendedName>
</protein>
<dbReference type="EMBL" id="CP000681">
    <property type="protein sequence ID" value="ABP76400.1"/>
    <property type="molecule type" value="Genomic_DNA"/>
</dbReference>
<dbReference type="SMR" id="A4Y8W7"/>
<dbReference type="STRING" id="319224.Sputcn32_2681"/>
<dbReference type="KEGG" id="spc:Sputcn32_2681"/>
<dbReference type="eggNOG" id="COG1678">
    <property type="taxonomic scope" value="Bacteria"/>
</dbReference>
<dbReference type="HOGENOM" id="CLU_057596_1_0_6"/>
<dbReference type="GO" id="GO:0005829">
    <property type="term" value="C:cytosol"/>
    <property type="evidence" value="ECO:0007669"/>
    <property type="project" value="TreeGrafter"/>
</dbReference>
<dbReference type="Gene3D" id="3.40.1740.10">
    <property type="entry name" value="VC0467-like"/>
    <property type="match status" value="1"/>
</dbReference>
<dbReference type="Gene3D" id="3.30.70.1300">
    <property type="entry name" value="VC0467-like domains"/>
    <property type="match status" value="1"/>
</dbReference>
<dbReference type="HAMAP" id="MF_00758">
    <property type="entry name" value="UPF0301"/>
    <property type="match status" value="1"/>
</dbReference>
<dbReference type="InterPro" id="IPR003774">
    <property type="entry name" value="AlgH-like"/>
</dbReference>
<dbReference type="NCBIfam" id="NF001266">
    <property type="entry name" value="PRK00228.1-1"/>
    <property type="match status" value="1"/>
</dbReference>
<dbReference type="PANTHER" id="PTHR30327">
    <property type="entry name" value="UNCHARACTERIZED PROTEIN YQGE"/>
    <property type="match status" value="1"/>
</dbReference>
<dbReference type="PANTHER" id="PTHR30327:SF1">
    <property type="entry name" value="UPF0301 PROTEIN YQGE"/>
    <property type="match status" value="1"/>
</dbReference>
<dbReference type="Pfam" id="PF02622">
    <property type="entry name" value="DUF179"/>
    <property type="match status" value="1"/>
</dbReference>
<dbReference type="SUPFAM" id="SSF143456">
    <property type="entry name" value="VC0467-like"/>
    <property type="match status" value="1"/>
</dbReference>
<proteinExistence type="inferred from homology"/>
<feature type="chain" id="PRO_1000046682" description="UPF0301 protein Sputcn32_2681">
    <location>
        <begin position="1"/>
        <end position="187"/>
    </location>
</feature>
<evidence type="ECO:0000255" key="1">
    <source>
        <dbReference type="HAMAP-Rule" id="MF_00758"/>
    </source>
</evidence>
<gene>
    <name type="ordered locus">Sputcn32_2681</name>
</gene>
<comment type="similarity">
    <text evidence="1">Belongs to the UPF0301 (AlgH) family.</text>
</comment>